<sequence length="238" mass="27627">MTSYWNFDFYLSPPQPCSYLPDQTATNLFADPEAAMDIARYSTLVRLGFRRSGRLVYRPRCLHCSACQPARIPVAQFRPNRSQRRAWKFNQDLSACYRPVEFRAEHFDLFRRYLGTRHPQGGMDDSTPEDYLNFIASGWNETSLIEFRDGKEQLLAVAAVDALTDGLSAVYSFFDPNAKKRSLGTYIILWEIGEAKALNLPYVYLGYWIKNSHKMSYKSAFHPLEVYQDKKWSILKET</sequence>
<comment type="function">
    <text evidence="1">Functions in the N-end rule pathway of protein degradation where it conjugates Leu from its aminoacyl-tRNA to the N-termini of proteins containing an N-terminal aspartate or glutamate.</text>
</comment>
<comment type="catalytic activity">
    <reaction evidence="1">
        <text>N-terminal L-glutamyl-[protein] + L-leucyl-tRNA(Leu) = N-terminal L-leucyl-L-glutamyl-[protein] + tRNA(Leu) + H(+)</text>
        <dbReference type="Rhea" id="RHEA:50412"/>
        <dbReference type="Rhea" id="RHEA-COMP:9613"/>
        <dbReference type="Rhea" id="RHEA-COMP:9622"/>
        <dbReference type="Rhea" id="RHEA-COMP:12664"/>
        <dbReference type="Rhea" id="RHEA-COMP:12668"/>
        <dbReference type="ChEBI" id="CHEBI:15378"/>
        <dbReference type="ChEBI" id="CHEBI:64721"/>
        <dbReference type="ChEBI" id="CHEBI:78442"/>
        <dbReference type="ChEBI" id="CHEBI:78494"/>
        <dbReference type="ChEBI" id="CHEBI:133041"/>
        <dbReference type="EC" id="2.3.2.29"/>
    </reaction>
</comment>
<comment type="catalytic activity">
    <reaction evidence="1">
        <text>N-terminal L-aspartyl-[protein] + L-leucyl-tRNA(Leu) = N-terminal L-leucyl-L-aspartyl-[protein] + tRNA(Leu) + H(+)</text>
        <dbReference type="Rhea" id="RHEA:50420"/>
        <dbReference type="Rhea" id="RHEA-COMP:9613"/>
        <dbReference type="Rhea" id="RHEA-COMP:9622"/>
        <dbReference type="Rhea" id="RHEA-COMP:12669"/>
        <dbReference type="Rhea" id="RHEA-COMP:12674"/>
        <dbReference type="ChEBI" id="CHEBI:15378"/>
        <dbReference type="ChEBI" id="CHEBI:64720"/>
        <dbReference type="ChEBI" id="CHEBI:78442"/>
        <dbReference type="ChEBI" id="CHEBI:78494"/>
        <dbReference type="ChEBI" id="CHEBI:133042"/>
        <dbReference type="EC" id="2.3.2.29"/>
    </reaction>
</comment>
<comment type="subcellular location">
    <subcellularLocation>
        <location evidence="1">Cytoplasm</location>
    </subcellularLocation>
</comment>
<comment type="similarity">
    <text evidence="1">Belongs to the R-transferase family. Bpt subfamily.</text>
</comment>
<name>BPT_NITOC</name>
<proteinExistence type="inferred from homology"/>
<evidence type="ECO:0000255" key="1">
    <source>
        <dbReference type="HAMAP-Rule" id="MF_00689"/>
    </source>
</evidence>
<accession>Q3J7Z6</accession>
<gene>
    <name evidence="1" type="primary">bpt</name>
    <name type="ordered locus">Noc_2597</name>
</gene>
<keyword id="KW-0012">Acyltransferase</keyword>
<keyword id="KW-0963">Cytoplasm</keyword>
<keyword id="KW-1185">Reference proteome</keyword>
<keyword id="KW-0808">Transferase</keyword>
<organism>
    <name type="scientific">Nitrosococcus oceani (strain ATCC 19707 / BCRC 17464 / JCM 30415 / NCIMB 11848 / C-107)</name>
    <dbReference type="NCBI Taxonomy" id="323261"/>
    <lineage>
        <taxon>Bacteria</taxon>
        <taxon>Pseudomonadati</taxon>
        <taxon>Pseudomonadota</taxon>
        <taxon>Gammaproteobacteria</taxon>
        <taxon>Chromatiales</taxon>
        <taxon>Chromatiaceae</taxon>
        <taxon>Nitrosococcus</taxon>
    </lineage>
</organism>
<feature type="chain" id="PRO_0000263196" description="Aspartate/glutamate leucyltransferase">
    <location>
        <begin position="1"/>
        <end position="238"/>
    </location>
</feature>
<reference key="1">
    <citation type="journal article" date="2006" name="Appl. Environ. Microbiol.">
        <title>Complete genome sequence of the marine, chemolithoautotrophic, ammonia-oxidizing bacterium Nitrosococcus oceani ATCC 19707.</title>
        <authorList>
            <person name="Klotz M.G."/>
            <person name="Arp D.J."/>
            <person name="Chain P.S.G."/>
            <person name="El-Sheikh A.F."/>
            <person name="Hauser L.J."/>
            <person name="Hommes N.G."/>
            <person name="Larimer F.W."/>
            <person name="Malfatti S.A."/>
            <person name="Norton J.M."/>
            <person name="Poret-Peterson A.T."/>
            <person name="Vergez L.M."/>
            <person name="Ward B.B."/>
        </authorList>
    </citation>
    <scope>NUCLEOTIDE SEQUENCE [LARGE SCALE GENOMIC DNA]</scope>
    <source>
        <strain>ATCC 19707 / BCRC 17464 / JCM 30415 / NCIMB 11848 / C-107</strain>
    </source>
</reference>
<protein>
    <recommendedName>
        <fullName evidence="1">Aspartate/glutamate leucyltransferase</fullName>
        <ecNumber evidence="1">2.3.2.29</ecNumber>
    </recommendedName>
</protein>
<dbReference type="EC" id="2.3.2.29" evidence="1"/>
<dbReference type="EMBL" id="CP000127">
    <property type="protein sequence ID" value="ABA59050.1"/>
    <property type="molecule type" value="Genomic_DNA"/>
</dbReference>
<dbReference type="RefSeq" id="WP_004269114.1">
    <property type="nucleotide sequence ID" value="NC_007484.1"/>
</dbReference>
<dbReference type="SMR" id="Q3J7Z6"/>
<dbReference type="STRING" id="323261.Noc_2597"/>
<dbReference type="KEGG" id="noc:Noc_2597"/>
<dbReference type="eggNOG" id="COG2935">
    <property type="taxonomic scope" value="Bacteria"/>
</dbReference>
<dbReference type="HOGENOM" id="CLU_077607_0_0_6"/>
<dbReference type="InParanoid" id="Q3J7Z6"/>
<dbReference type="Proteomes" id="UP000006838">
    <property type="component" value="Chromosome"/>
</dbReference>
<dbReference type="GO" id="GO:0005737">
    <property type="term" value="C:cytoplasm"/>
    <property type="evidence" value="ECO:0007669"/>
    <property type="project" value="UniProtKB-SubCell"/>
</dbReference>
<dbReference type="GO" id="GO:0004057">
    <property type="term" value="F:arginyl-tRNA--protein transferase activity"/>
    <property type="evidence" value="ECO:0007669"/>
    <property type="project" value="InterPro"/>
</dbReference>
<dbReference type="GO" id="GO:0008914">
    <property type="term" value="F:leucyl-tRNA--protein transferase activity"/>
    <property type="evidence" value="ECO:0007669"/>
    <property type="project" value="UniProtKB-UniRule"/>
</dbReference>
<dbReference type="GO" id="GO:0071596">
    <property type="term" value="P:ubiquitin-dependent protein catabolic process via the N-end rule pathway"/>
    <property type="evidence" value="ECO:0007669"/>
    <property type="project" value="InterPro"/>
</dbReference>
<dbReference type="HAMAP" id="MF_00689">
    <property type="entry name" value="Bpt"/>
    <property type="match status" value="1"/>
</dbReference>
<dbReference type="InterPro" id="IPR016181">
    <property type="entry name" value="Acyl_CoA_acyltransferase"/>
</dbReference>
<dbReference type="InterPro" id="IPR017138">
    <property type="entry name" value="Asp_Glu_LeuTrfase"/>
</dbReference>
<dbReference type="InterPro" id="IPR030700">
    <property type="entry name" value="N-end_Aminoacyl_Trfase"/>
</dbReference>
<dbReference type="InterPro" id="IPR007472">
    <property type="entry name" value="N-end_Aminoacyl_Trfase_C"/>
</dbReference>
<dbReference type="InterPro" id="IPR007471">
    <property type="entry name" value="N-end_Aminoacyl_Trfase_N"/>
</dbReference>
<dbReference type="NCBIfam" id="NF002341">
    <property type="entry name" value="PRK01305.1-1"/>
    <property type="match status" value="1"/>
</dbReference>
<dbReference type="NCBIfam" id="NF002342">
    <property type="entry name" value="PRK01305.1-3"/>
    <property type="match status" value="1"/>
</dbReference>
<dbReference type="NCBIfam" id="NF002346">
    <property type="entry name" value="PRK01305.2-3"/>
    <property type="match status" value="1"/>
</dbReference>
<dbReference type="PANTHER" id="PTHR21367">
    <property type="entry name" value="ARGININE-TRNA-PROTEIN TRANSFERASE 1"/>
    <property type="match status" value="1"/>
</dbReference>
<dbReference type="PANTHER" id="PTHR21367:SF1">
    <property type="entry name" value="ARGINYL-TRNA--PROTEIN TRANSFERASE 1"/>
    <property type="match status" value="1"/>
</dbReference>
<dbReference type="Pfam" id="PF04377">
    <property type="entry name" value="ATE_C"/>
    <property type="match status" value="1"/>
</dbReference>
<dbReference type="Pfam" id="PF04376">
    <property type="entry name" value="ATE_N"/>
    <property type="match status" value="1"/>
</dbReference>
<dbReference type="PIRSF" id="PIRSF037208">
    <property type="entry name" value="ATE_pro_prd"/>
    <property type="match status" value="1"/>
</dbReference>
<dbReference type="SUPFAM" id="SSF55729">
    <property type="entry name" value="Acyl-CoA N-acyltransferases (Nat)"/>
    <property type="match status" value="1"/>
</dbReference>